<reference key="1">
    <citation type="journal article" date="2009" name="Infect. Immun.">
        <title>Comparative genomics reveal extensive transposon-mediated genomic plasticity and diversity among potential effector proteins within the genus Coxiella.</title>
        <authorList>
            <person name="Beare P.A."/>
            <person name="Unsworth N."/>
            <person name="Andoh M."/>
            <person name="Voth D.E."/>
            <person name="Omsland A."/>
            <person name="Gilk S.D."/>
            <person name="Williams K.P."/>
            <person name="Sobral B.W."/>
            <person name="Kupko J.J. III"/>
            <person name="Porcella S.F."/>
            <person name="Samuel J.E."/>
            <person name="Heinzen R.A."/>
        </authorList>
    </citation>
    <scope>NUCLEOTIDE SEQUENCE [LARGE SCALE GENOMIC DNA]</scope>
    <source>
        <strain>CbuK_Q154</strain>
    </source>
</reference>
<dbReference type="EC" id="5.4.2.10" evidence="1"/>
<dbReference type="EMBL" id="CP001020">
    <property type="protein sequence ID" value="ACJ20398.1"/>
    <property type="molecule type" value="Genomic_DNA"/>
</dbReference>
<dbReference type="RefSeq" id="WP_005770992.1">
    <property type="nucleotide sequence ID" value="NC_011528.1"/>
</dbReference>
<dbReference type="SMR" id="B6J7Z9"/>
<dbReference type="KEGG" id="cbc:CbuK_1212"/>
<dbReference type="HOGENOM" id="CLU_016950_7_0_6"/>
<dbReference type="GO" id="GO:0005829">
    <property type="term" value="C:cytosol"/>
    <property type="evidence" value="ECO:0007669"/>
    <property type="project" value="TreeGrafter"/>
</dbReference>
<dbReference type="GO" id="GO:0000287">
    <property type="term" value="F:magnesium ion binding"/>
    <property type="evidence" value="ECO:0007669"/>
    <property type="project" value="UniProtKB-UniRule"/>
</dbReference>
<dbReference type="GO" id="GO:0008966">
    <property type="term" value="F:phosphoglucosamine mutase activity"/>
    <property type="evidence" value="ECO:0007669"/>
    <property type="project" value="UniProtKB-UniRule"/>
</dbReference>
<dbReference type="GO" id="GO:0004615">
    <property type="term" value="F:phosphomannomutase activity"/>
    <property type="evidence" value="ECO:0007669"/>
    <property type="project" value="TreeGrafter"/>
</dbReference>
<dbReference type="GO" id="GO:0005975">
    <property type="term" value="P:carbohydrate metabolic process"/>
    <property type="evidence" value="ECO:0007669"/>
    <property type="project" value="InterPro"/>
</dbReference>
<dbReference type="GO" id="GO:0009252">
    <property type="term" value="P:peptidoglycan biosynthetic process"/>
    <property type="evidence" value="ECO:0007669"/>
    <property type="project" value="TreeGrafter"/>
</dbReference>
<dbReference type="GO" id="GO:0006048">
    <property type="term" value="P:UDP-N-acetylglucosamine biosynthetic process"/>
    <property type="evidence" value="ECO:0007669"/>
    <property type="project" value="TreeGrafter"/>
</dbReference>
<dbReference type="CDD" id="cd05802">
    <property type="entry name" value="GlmM"/>
    <property type="match status" value="1"/>
</dbReference>
<dbReference type="FunFam" id="3.30.310.50:FF:000001">
    <property type="entry name" value="Phosphoglucosamine mutase"/>
    <property type="match status" value="1"/>
</dbReference>
<dbReference type="FunFam" id="3.40.120.10:FF:000001">
    <property type="entry name" value="Phosphoglucosamine mutase"/>
    <property type="match status" value="1"/>
</dbReference>
<dbReference type="FunFam" id="3.40.120.10:FF:000003">
    <property type="entry name" value="Phosphoglucosamine mutase"/>
    <property type="match status" value="1"/>
</dbReference>
<dbReference type="Gene3D" id="3.40.120.10">
    <property type="entry name" value="Alpha-D-Glucose-1,6-Bisphosphate, subunit A, domain 3"/>
    <property type="match status" value="3"/>
</dbReference>
<dbReference type="Gene3D" id="3.30.310.50">
    <property type="entry name" value="Alpha-D-phosphohexomutase, C-terminal domain"/>
    <property type="match status" value="1"/>
</dbReference>
<dbReference type="HAMAP" id="MF_01554_B">
    <property type="entry name" value="GlmM_B"/>
    <property type="match status" value="1"/>
</dbReference>
<dbReference type="InterPro" id="IPR005844">
    <property type="entry name" value="A-D-PHexomutase_a/b/a-I"/>
</dbReference>
<dbReference type="InterPro" id="IPR016055">
    <property type="entry name" value="A-D-PHexomutase_a/b/a-I/II/III"/>
</dbReference>
<dbReference type="InterPro" id="IPR005845">
    <property type="entry name" value="A-D-PHexomutase_a/b/a-II"/>
</dbReference>
<dbReference type="InterPro" id="IPR005846">
    <property type="entry name" value="A-D-PHexomutase_a/b/a-III"/>
</dbReference>
<dbReference type="InterPro" id="IPR005843">
    <property type="entry name" value="A-D-PHexomutase_C"/>
</dbReference>
<dbReference type="InterPro" id="IPR036900">
    <property type="entry name" value="A-D-PHexomutase_C_sf"/>
</dbReference>
<dbReference type="InterPro" id="IPR005841">
    <property type="entry name" value="Alpha-D-phosphohexomutase_SF"/>
</dbReference>
<dbReference type="InterPro" id="IPR006352">
    <property type="entry name" value="GlmM_bact"/>
</dbReference>
<dbReference type="InterPro" id="IPR050060">
    <property type="entry name" value="Phosphoglucosamine_mutase"/>
</dbReference>
<dbReference type="NCBIfam" id="TIGR01455">
    <property type="entry name" value="glmM"/>
    <property type="match status" value="1"/>
</dbReference>
<dbReference type="NCBIfam" id="NF008139">
    <property type="entry name" value="PRK10887.1"/>
    <property type="match status" value="1"/>
</dbReference>
<dbReference type="PANTHER" id="PTHR42946:SF1">
    <property type="entry name" value="PHOSPHOGLUCOMUTASE (ALPHA-D-GLUCOSE-1,6-BISPHOSPHATE-DEPENDENT)"/>
    <property type="match status" value="1"/>
</dbReference>
<dbReference type="PANTHER" id="PTHR42946">
    <property type="entry name" value="PHOSPHOHEXOSE MUTASE"/>
    <property type="match status" value="1"/>
</dbReference>
<dbReference type="Pfam" id="PF02878">
    <property type="entry name" value="PGM_PMM_I"/>
    <property type="match status" value="1"/>
</dbReference>
<dbReference type="Pfam" id="PF02879">
    <property type="entry name" value="PGM_PMM_II"/>
    <property type="match status" value="1"/>
</dbReference>
<dbReference type="Pfam" id="PF02880">
    <property type="entry name" value="PGM_PMM_III"/>
    <property type="match status" value="1"/>
</dbReference>
<dbReference type="Pfam" id="PF00408">
    <property type="entry name" value="PGM_PMM_IV"/>
    <property type="match status" value="1"/>
</dbReference>
<dbReference type="PRINTS" id="PR00509">
    <property type="entry name" value="PGMPMM"/>
</dbReference>
<dbReference type="SUPFAM" id="SSF55957">
    <property type="entry name" value="Phosphoglucomutase, C-terminal domain"/>
    <property type="match status" value="1"/>
</dbReference>
<dbReference type="SUPFAM" id="SSF53738">
    <property type="entry name" value="Phosphoglucomutase, first 3 domains"/>
    <property type="match status" value="3"/>
</dbReference>
<protein>
    <recommendedName>
        <fullName evidence="1">Phosphoglucosamine mutase</fullName>
        <ecNumber evidence="1">5.4.2.10</ecNumber>
    </recommendedName>
</protein>
<organism>
    <name type="scientific">Coxiella burnetii (strain CbuK_Q154)</name>
    <name type="common">Coxiella burnetii (strain Q154)</name>
    <dbReference type="NCBI Taxonomy" id="434924"/>
    <lineage>
        <taxon>Bacteria</taxon>
        <taxon>Pseudomonadati</taxon>
        <taxon>Pseudomonadota</taxon>
        <taxon>Gammaproteobacteria</taxon>
        <taxon>Legionellales</taxon>
        <taxon>Coxiellaceae</taxon>
        <taxon>Coxiella</taxon>
    </lineage>
</organism>
<comment type="function">
    <text evidence="1">Catalyzes the conversion of glucosamine-6-phosphate to glucosamine-1-phosphate.</text>
</comment>
<comment type="catalytic activity">
    <reaction evidence="1">
        <text>alpha-D-glucosamine 1-phosphate = D-glucosamine 6-phosphate</text>
        <dbReference type="Rhea" id="RHEA:23424"/>
        <dbReference type="ChEBI" id="CHEBI:58516"/>
        <dbReference type="ChEBI" id="CHEBI:58725"/>
        <dbReference type="EC" id="5.4.2.10"/>
    </reaction>
</comment>
<comment type="cofactor">
    <cofactor evidence="1">
        <name>Mg(2+)</name>
        <dbReference type="ChEBI" id="CHEBI:18420"/>
    </cofactor>
    <text evidence="1">Binds 1 Mg(2+) ion per subunit.</text>
</comment>
<comment type="PTM">
    <text evidence="1">Activated by phosphorylation.</text>
</comment>
<comment type="similarity">
    <text evidence="1">Belongs to the phosphohexose mutase family.</text>
</comment>
<keyword id="KW-0413">Isomerase</keyword>
<keyword id="KW-0460">Magnesium</keyword>
<keyword id="KW-0479">Metal-binding</keyword>
<keyword id="KW-0597">Phosphoprotein</keyword>
<name>GLMM_COXB1</name>
<gene>
    <name evidence="1" type="primary">glmM</name>
    <name type="ordered locus">CbuK_1212</name>
</gene>
<accession>B6J7Z9</accession>
<feature type="chain" id="PRO_1000201081" description="Phosphoglucosamine mutase">
    <location>
        <begin position="1"/>
        <end position="446"/>
    </location>
</feature>
<feature type="active site" description="Phosphoserine intermediate" evidence="1">
    <location>
        <position position="101"/>
    </location>
</feature>
<feature type="binding site" description="via phosphate group" evidence="1">
    <location>
        <position position="101"/>
    </location>
    <ligand>
        <name>Mg(2+)</name>
        <dbReference type="ChEBI" id="CHEBI:18420"/>
    </ligand>
</feature>
<feature type="binding site" evidence="1">
    <location>
        <position position="240"/>
    </location>
    <ligand>
        <name>Mg(2+)</name>
        <dbReference type="ChEBI" id="CHEBI:18420"/>
    </ligand>
</feature>
<feature type="binding site" evidence="1">
    <location>
        <position position="242"/>
    </location>
    <ligand>
        <name>Mg(2+)</name>
        <dbReference type="ChEBI" id="CHEBI:18420"/>
    </ligand>
</feature>
<feature type="binding site" evidence="1">
    <location>
        <position position="244"/>
    </location>
    <ligand>
        <name>Mg(2+)</name>
        <dbReference type="ChEBI" id="CHEBI:18420"/>
    </ligand>
</feature>
<feature type="modified residue" description="Phosphoserine" evidence="1">
    <location>
        <position position="101"/>
    </location>
</feature>
<sequence length="446" mass="48150">MQKKYFGTDGIRGKVGNSLINAEFMLKLGWAVGRVLANSHSATVLIGKDTRISGYMIESALQAGLSAAGVNIKLTGPMPTPAIAYLTHSVRADAGIVISASHNHYPDNGVKFFNKDGFKLSDELELAIEKQIDKPMKTVVADRLGKAARMNEAHGRYIEFCKSTFPSNLTLKGLKIVVDCANGAAYAVAPSIFHELGAEVVAIADDPDGFNINQTCGATDTAHLQEMVVKHNADVGIAFDGDGDRLIMVDHHGLRVDGDELLCIMAIDRFYLKENAPLGVVGTIMSNLGLEQTLKRHHIAFERSPVGDRYVLDLMQQKGWFLGGESSGHIVDLGFTTTGDGVITALQILRIMQQAEKPLADLKKVMVKHPQVLINVPIKGILDIAQNPNIKKAITEAEKQLNGAGRILLRPSGTEPVIRVMVEGSDEGIVRQTAEMLAAAVQQSTL</sequence>
<evidence type="ECO:0000255" key="1">
    <source>
        <dbReference type="HAMAP-Rule" id="MF_01554"/>
    </source>
</evidence>
<proteinExistence type="inferred from homology"/>